<sequence length="1036" mass="118905">MDNEDKISISAKEEKILSFWKEQDIFQKTLDNREGCPTFSFYDGPPFATGLPHYGHLLAGTIKDVVCRYASMDGHYVPRRFGWDCHGVPVEYEVEKSLGLTEPGAIERFGVANFNEECRKIVFRYADEWKYFVDRIGRWVDFSATWRTMDLSFMESVWWVFRSLYDQGLVYEGTKVVPFSTKLGTPLSNFEAGQNYKEVDDPSVVIKFALQDNQGFLLAWTTTPWTLVSNMALAVHPELTYVRIKDKESGDEYILGQESLPRWFPDRESYEWIGQLSGKSLVGQSYEPLFPYFQDKKELEAFRILPADFIEESEGTGIVHMAPAFGEADFFACQEHNVPLVCPVDNQGCYTAEVKDFVGEYIKSADKGIARRLKNENKLFYQGTVRHRYPFCWRTDSPLIYKAVNSWFVAVEKVKSKMLKANESIHWTPGHIKQGRFGKWLEGARDWAISRNRYWGTPIPIWRSDDGELLVIGSIQELEALSGQKIVDLHRHFIDEIEINQNGKSFRRIPYVFDCWFDSGAMPYAQNHYPFERAEETEACFPADFIAEGLDQTRGWFYTLTVIAAALFDQPAFKNVIVNGIILAEDGNKMSKRLNNYPSPKMIMDAYGADALRLYLLNSVVVKAEDLRFSDKGVESVLKQVLLPLSNALAFYKTYAELYGFDPKETDNIELAEIDCWILSSLYSLVGKTRESMSQYDLHAAVNPFVDFIEDLTNWYIRRSRRRFWDAEDSADRRAAFSTLYEVLVVFSKVIAPFIPFIAEDMYQQLRGETDPESVHLCDFPHVVLEKILPDLERKMQDIREIVALGHSLRKEHKLKVRQPLQNVYIVGSKERMEALAQVGSLIGEELNVKDVHFCSETPEYVTTLIKPNFRTLGKKVGNRLPEIQRALARLPQEQIRAFMHKGQMVVSLGEETISLDKEDITVSWASAEGFVARSSASFVAVLDCQLTEPLIMEGIARELVNKINTMRRNGKLHVSDRIAIRLHAPVIVQEAFALHKEYICEETLTTSVSVIDYKEGEEWDINGHAVSFVLERVER</sequence>
<protein>
    <recommendedName>
        <fullName evidence="1">Isoleucine--tRNA ligase</fullName>
        <ecNumber evidence="1">6.1.1.5</ecNumber>
    </recommendedName>
    <alternativeName>
        <fullName evidence="1">Isoleucyl-tRNA synthetase</fullName>
        <shortName evidence="1">IleRS</shortName>
    </alternativeName>
</protein>
<name>SYI_CHLTA</name>
<reference key="1">
    <citation type="journal article" date="2005" name="Infect. Immun.">
        <title>Comparative genomic analysis of Chlamydia trachomatis oculotropic and genitotropic strains.</title>
        <authorList>
            <person name="Carlson J.H."/>
            <person name="Porcella S.F."/>
            <person name="McClarty G."/>
            <person name="Caldwell H.D."/>
        </authorList>
    </citation>
    <scope>NUCLEOTIDE SEQUENCE [LARGE SCALE GENOMIC DNA]</scope>
    <source>
        <strain>ATCC VR-571B / DSM 19440 / HAR-13</strain>
    </source>
</reference>
<feature type="chain" id="PRO_1000216254" description="Isoleucine--tRNA ligase">
    <location>
        <begin position="1"/>
        <end position="1036"/>
    </location>
</feature>
<feature type="short sequence motif" description="'HIGH' region">
    <location>
        <begin position="46"/>
        <end position="56"/>
    </location>
</feature>
<feature type="short sequence motif" description="'KMSKS' region">
    <location>
        <begin position="589"/>
        <end position="593"/>
    </location>
</feature>
<feature type="binding site" evidence="1">
    <location>
        <position position="592"/>
    </location>
    <ligand>
        <name>ATP</name>
        <dbReference type="ChEBI" id="CHEBI:30616"/>
    </ligand>
</feature>
<comment type="function">
    <text evidence="1">Catalyzes the attachment of isoleucine to tRNA(Ile). As IleRS can inadvertently accommodate and process structurally similar amino acids such as valine, to avoid such errors it has two additional distinct tRNA(Ile)-dependent editing activities. One activity is designated as 'pretransfer' editing and involves the hydrolysis of activated Val-AMP. The other activity is designated 'posttransfer' editing and involves deacylation of mischarged Val-tRNA(Ile).</text>
</comment>
<comment type="catalytic activity">
    <reaction evidence="1">
        <text>tRNA(Ile) + L-isoleucine + ATP = L-isoleucyl-tRNA(Ile) + AMP + diphosphate</text>
        <dbReference type="Rhea" id="RHEA:11060"/>
        <dbReference type="Rhea" id="RHEA-COMP:9666"/>
        <dbReference type="Rhea" id="RHEA-COMP:9695"/>
        <dbReference type="ChEBI" id="CHEBI:30616"/>
        <dbReference type="ChEBI" id="CHEBI:33019"/>
        <dbReference type="ChEBI" id="CHEBI:58045"/>
        <dbReference type="ChEBI" id="CHEBI:78442"/>
        <dbReference type="ChEBI" id="CHEBI:78528"/>
        <dbReference type="ChEBI" id="CHEBI:456215"/>
        <dbReference type="EC" id="6.1.1.5"/>
    </reaction>
</comment>
<comment type="cofactor">
    <cofactor evidence="1">
        <name>Zn(2+)</name>
        <dbReference type="ChEBI" id="CHEBI:29105"/>
    </cofactor>
</comment>
<comment type="subunit">
    <text evidence="1">Monomer.</text>
</comment>
<comment type="subcellular location">
    <subcellularLocation>
        <location evidence="1">Cytoplasm</location>
    </subcellularLocation>
</comment>
<comment type="domain">
    <text evidence="1">IleRS has two distinct active sites: one for aminoacylation and one for editing. The misactivated valine is translocated from the active site to the editing site, which sterically excludes the correctly activated isoleucine. The single editing site contains two valyl binding pockets, one specific for each substrate (Val-AMP or Val-tRNA(Ile)).</text>
</comment>
<comment type="similarity">
    <text evidence="1">Belongs to the class-I aminoacyl-tRNA synthetase family. IleS type 2 subfamily.</text>
</comment>
<gene>
    <name evidence="1" type="primary">ileS</name>
    <name type="ordered locus">CTA_0021</name>
</gene>
<organism>
    <name type="scientific">Chlamydia trachomatis serovar A (strain ATCC VR-571B / DSM 19440 / HAR-13)</name>
    <dbReference type="NCBI Taxonomy" id="315277"/>
    <lineage>
        <taxon>Bacteria</taxon>
        <taxon>Pseudomonadati</taxon>
        <taxon>Chlamydiota</taxon>
        <taxon>Chlamydiia</taxon>
        <taxon>Chlamydiales</taxon>
        <taxon>Chlamydiaceae</taxon>
        <taxon>Chlamydia/Chlamydophila group</taxon>
        <taxon>Chlamydia</taxon>
    </lineage>
</organism>
<proteinExistence type="inferred from homology"/>
<dbReference type="EC" id="6.1.1.5" evidence="1"/>
<dbReference type="EMBL" id="CP000051">
    <property type="protein sequence ID" value="AAX50269.1"/>
    <property type="molecule type" value="Genomic_DNA"/>
</dbReference>
<dbReference type="RefSeq" id="WP_011324523.1">
    <property type="nucleotide sequence ID" value="NC_007429.1"/>
</dbReference>
<dbReference type="SMR" id="Q3KN03"/>
<dbReference type="KEGG" id="cta:CTA_0021"/>
<dbReference type="HOGENOM" id="CLU_001493_1_1_0"/>
<dbReference type="Proteomes" id="UP000002532">
    <property type="component" value="Chromosome"/>
</dbReference>
<dbReference type="GO" id="GO:0005737">
    <property type="term" value="C:cytoplasm"/>
    <property type="evidence" value="ECO:0007669"/>
    <property type="project" value="UniProtKB-SubCell"/>
</dbReference>
<dbReference type="GO" id="GO:0002161">
    <property type="term" value="F:aminoacyl-tRNA deacylase activity"/>
    <property type="evidence" value="ECO:0007669"/>
    <property type="project" value="InterPro"/>
</dbReference>
<dbReference type="GO" id="GO:0005524">
    <property type="term" value="F:ATP binding"/>
    <property type="evidence" value="ECO:0007669"/>
    <property type="project" value="UniProtKB-UniRule"/>
</dbReference>
<dbReference type="GO" id="GO:0004822">
    <property type="term" value="F:isoleucine-tRNA ligase activity"/>
    <property type="evidence" value="ECO:0007669"/>
    <property type="project" value="UniProtKB-UniRule"/>
</dbReference>
<dbReference type="GO" id="GO:0000049">
    <property type="term" value="F:tRNA binding"/>
    <property type="evidence" value="ECO:0007669"/>
    <property type="project" value="InterPro"/>
</dbReference>
<dbReference type="GO" id="GO:0008270">
    <property type="term" value="F:zinc ion binding"/>
    <property type="evidence" value="ECO:0007669"/>
    <property type="project" value="UniProtKB-UniRule"/>
</dbReference>
<dbReference type="GO" id="GO:0006428">
    <property type="term" value="P:isoleucyl-tRNA aminoacylation"/>
    <property type="evidence" value="ECO:0007669"/>
    <property type="project" value="UniProtKB-UniRule"/>
</dbReference>
<dbReference type="CDD" id="cd07961">
    <property type="entry name" value="Anticodon_Ia_Ile_ABEc"/>
    <property type="match status" value="1"/>
</dbReference>
<dbReference type="CDD" id="cd00818">
    <property type="entry name" value="IleRS_core"/>
    <property type="match status" value="1"/>
</dbReference>
<dbReference type="FunFam" id="3.40.50.620:FF:000241">
    <property type="entry name" value="Isoleucine--tRNA ligase"/>
    <property type="match status" value="1"/>
</dbReference>
<dbReference type="FunFam" id="3.40.50.620:FF:000133">
    <property type="entry name" value="Isoleucyl-tRNA synthetase, cytoplasmic"/>
    <property type="match status" value="1"/>
</dbReference>
<dbReference type="Gene3D" id="3.40.50.620">
    <property type="entry name" value="HUPs"/>
    <property type="match status" value="2"/>
</dbReference>
<dbReference type="Gene3D" id="1.10.730.10">
    <property type="entry name" value="Isoleucyl-tRNA Synthetase, Domain 1"/>
    <property type="match status" value="1"/>
</dbReference>
<dbReference type="HAMAP" id="MF_02003">
    <property type="entry name" value="Ile_tRNA_synth_type2"/>
    <property type="match status" value="1"/>
</dbReference>
<dbReference type="InterPro" id="IPR001412">
    <property type="entry name" value="aa-tRNA-synth_I_CS"/>
</dbReference>
<dbReference type="InterPro" id="IPR002300">
    <property type="entry name" value="aa-tRNA-synth_Ia"/>
</dbReference>
<dbReference type="InterPro" id="IPR033709">
    <property type="entry name" value="Anticodon_Ile_ABEc"/>
</dbReference>
<dbReference type="InterPro" id="IPR002301">
    <property type="entry name" value="Ile-tRNA-ligase"/>
</dbReference>
<dbReference type="InterPro" id="IPR023586">
    <property type="entry name" value="Ile-tRNA-ligase_type2"/>
</dbReference>
<dbReference type="InterPro" id="IPR013155">
    <property type="entry name" value="M/V/L/I-tRNA-synth_anticd-bd"/>
</dbReference>
<dbReference type="InterPro" id="IPR014729">
    <property type="entry name" value="Rossmann-like_a/b/a_fold"/>
</dbReference>
<dbReference type="InterPro" id="IPR009080">
    <property type="entry name" value="tRNAsynth_Ia_anticodon-bd"/>
</dbReference>
<dbReference type="InterPro" id="IPR009008">
    <property type="entry name" value="Val/Leu/Ile-tRNA-synth_edit"/>
</dbReference>
<dbReference type="NCBIfam" id="TIGR00392">
    <property type="entry name" value="ileS"/>
    <property type="match status" value="1"/>
</dbReference>
<dbReference type="PANTHER" id="PTHR42780:SF1">
    <property type="entry name" value="ISOLEUCINE--TRNA LIGASE, CYTOPLASMIC"/>
    <property type="match status" value="1"/>
</dbReference>
<dbReference type="PANTHER" id="PTHR42780">
    <property type="entry name" value="SOLEUCYL-TRNA SYNTHETASE"/>
    <property type="match status" value="1"/>
</dbReference>
<dbReference type="Pfam" id="PF08264">
    <property type="entry name" value="Anticodon_1"/>
    <property type="match status" value="1"/>
</dbReference>
<dbReference type="Pfam" id="PF19302">
    <property type="entry name" value="DUF5915"/>
    <property type="match status" value="1"/>
</dbReference>
<dbReference type="Pfam" id="PF00133">
    <property type="entry name" value="tRNA-synt_1"/>
    <property type="match status" value="1"/>
</dbReference>
<dbReference type="PRINTS" id="PR00984">
    <property type="entry name" value="TRNASYNTHILE"/>
</dbReference>
<dbReference type="SUPFAM" id="SSF47323">
    <property type="entry name" value="Anticodon-binding domain of a subclass of class I aminoacyl-tRNA synthetases"/>
    <property type="match status" value="2"/>
</dbReference>
<dbReference type="SUPFAM" id="SSF52374">
    <property type="entry name" value="Nucleotidylyl transferase"/>
    <property type="match status" value="1"/>
</dbReference>
<dbReference type="SUPFAM" id="SSF50677">
    <property type="entry name" value="ValRS/IleRS/LeuRS editing domain"/>
    <property type="match status" value="1"/>
</dbReference>
<dbReference type="PROSITE" id="PS00178">
    <property type="entry name" value="AA_TRNA_LIGASE_I"/>
    <property type="match status" value="1"/>
</dbReference>
<keyword id="KW-0030">Aminoacyl-tRNA synthetase</keyword>
<keyword id="KW-0067">ATP-binding</keyword>
<keyword id="KW-0963">Cytoplasm</keyword>
<keyword id="KW-0436">Ligase</keyword>
<keyword id="KW-0479">Metal-binding</keyword>
<keyword id="KW-0547">Nucleotide-binding</keyword>
<keyword id="KW-0648">Protein biosynthesis</keyword>
<keyword id="KW-0862">Zinc</keyword>
<evidence type="ECO:0000255" key="1">
    <source>
        <dbReference type="HAMAP-Rule" id="MF_02003"/>
    </source>
</evidence>
<accession>Q3KN03</accession>